<dbReference type="EC" id="3.4.24.65"/>
<dbReference type="EMBL" id="X98517">
    <property type="protein sequence ID" value="CAA67142.1"/>
    <property type="molecule type" value="mRNA"/>
</dbReference>
<dbReference type="EMBL" id="BC088120">
    <property type="protein sequence ID" value="AAH88120.1"/>
    <property type="molecule type" value="mRNA"/>
</dbReference>
<dbReference type="RefSeq" id="NP_446415.2">
    <property type="nucleotide sequence ID" value="NM_053963.2"/>
</dbReference>
<dbReference type="SMR" id="Q63341"/>
<dbReference type="FunCoup" id="Q63341">
    <property type="interactions" value="19"/>
</dbReference>
<dbReference type="STRING" id="10116.ENSRNOP00000011727"/>
<dbReference type="BindingDB" id="Q63341"/>
<dbReference type="ChEMBL" id="CHEMBL5506"/>
<dbReference type="MEROPS" id="M10.009"/>
<dbReference type="GlyCosmos" id="Q63341">
    <property type="glycosylation" value="1 site, No reported glycans"/>
</dbReference>
<dbReference type="GlyGen" id="Q63341">
    <property type="glycosylation" value="1 site"/>
</dbReference>
<dbReference type="PhosphoSitePlus" id="Q63341"/>
<dbReference type="PaxDb" id="10116-ENSRNOP00000011727"/>
<dbReference type="GeneID" id="117033"/>
<dbReference type="KEGG" id="rno:117033"/>
<dbReference type="UCSC" id="RGD:620195">
    <property type="organism name" value="rat"/>
</dbReference>
<dbReference type="AGR" id="RGD:620195"/>
<dbReference type="CTD" id="4321"/>
<dbReference type="RGD" id="620195">
    <property type="gene designation" value="Mmp12"/>
</dbReference>
<dbReference type="eggNOG" id="KOG1565">
    <property type="taxonomic scope" value="Eukaryota"/>
</dbReference>
<dbReference type="InParanoid" id="Q63341"/>
<dbReference type="OrthoDB" id="406838at2759"/>
<dbReference type="PhylomeDB" id="Q63341"/>
<dbReference type="TreeFam" id="TF315428"/>
<dbReference type="Reactome" id="R-RNO-1442490">
    <property type="pathway name" value="Collagen degradation"/>
</dbReference>
<dbReference type="Reactome" id="R-RNO-1474228">
    <property type="pathway name" value="Degradation of the extracellular matrix"/>
</dbReference>
<dbReference type="PRO" id="PR:Q63341"/>
<dbReference type="Proteomes" id="UP000002494">
    <property type="component" value="Unplaced"/>
</dbReference>
<dbReference type="GO" id="GO:0005737">
    <property type="term" value="C:cytoplasm"/>
    <property type="evidence" value="ECO:0000266"/>
    <property type="project" value="RGD"/>
</dbReference>
<dbReference type="GO" id="GO:0031012">
    <property type="term" value="C:extracellular matrix"/>
    <property type="evidence" value="ECO:0007669"/>
    <property type="project" value="InterPro"/>
</dbReference>
<dbReference type="GO" id="GO:0005615">
    <property type="term" value="C:extracellular space"/>
    <property type="evidence" value="ECO:0000266"/>
    <property type="project" value="RGD"/>
</dbReference>
<dbReference type="GO" id="GO:0005634">
    <property type="term" value="C:nucleus"/>
    <property type="evidence" value="ECO:0000266"/>
    <property type="project" value="RGD"/>
</dbReference>
<dbReference type="GO" id="GO:0005509">
    <property type="term" value="F:calcium ion binding"/>
    <property type="evidence" value="ECO:0000266"/>
    <property type="project" value="RGD"/>
</dbReference>
<dbReference type="GO" id="GO:0005518">
    <property type="term" value="F:collagen binding"/>
    <property type="evidence" value="ECO:0000266"/>
    <property type="project" value="RGD"/>
</dbReference>
<dbReference type="GO" id="GO:0001046">
    <property type="term" value="F:core promoter sequence-specific DNA binding"/>
    <property type="evidence" value="ECO:0000266"/>
    <property type="project" value="RGD"/>
</dbReference>
<dbReference type="GO" id="GO:0004222">
    <property type="term" value="F:metalloendopeptidase activity"/>
    <property type="evidence" value="ECO:0000266"/>
    <property type="project" value="RGD"/>
</dbReference>
<dbReference type="GO" id="GO:0043565">
    <property type="term" value="F:sequence-specific DNA binding"/>
    <property type="evidence" value="ECO:0000266"/>
    <property type="project" value="RGD"/>
</dbReference>
<dbReference type="GO" id="GO:0008270">
    <property type="term" value="F:zinc ion binding"/>
    <property type="evidence" value="ECO:0000266"/>
    <property type="project" value="RGD"/>
</dbReference>
<dbReference type="GO" id="GO:0060435">
    <property type="term" value="P:bronchiole development"/>
    <property type="evidence" value="ECO:0000266"/>
    <property type="project" value="RGD"/>
</dbReference>
<dbReference type="GO" id="GO:0098586">
    <property type="term" value="P:cellular response to virus"/>
    <property type="evidence" value="ECO:0000266"/>
    <property type="project" value="RGD"/>
</dbReference>
<dbReference type="GO" id="GO:0030574">
    <property type="term" value="P:collagen catabolic process"/>
    <property type="evidence" value="ECO:0000318"/>
    <property type="project" value="GO_Central"/>
</dbReference>
<dbReference type="GO" id="GO:0060309">
    <property type="term" value="P:elastin catabolic process"/>
    <property type="evidence" value="ECO:0000266"/>
    <property type="project" value="RGD"/>
</dbReference>
<dbReference type="GO" id="GO:0030198">
    <property type="term" value="P:extracellular matrix organization"/>
    <property type="evidence" value="ECO:0000318"/>
    <property type="project" value="GO_Central"/>
</dbReference>
<dbReference type="GO" id="GO:0048286">
    <property type="term" value="P:lung alveolus development"/>
    <property type="evidence" value="ECO:0000266"/>
    <property type="project" value="RGD"/>
</dbReference>
<dbReference type="GO" id="GO:1904905">
    <property type="term" value="P:negative regulation of endothelial cell-matrix adhesion via fibronectin"/>
    <property type="evidence" value="ECO:0000266"/>
    <property type="project" value="RGD"/>
</dbReference>
<dbReference type="GO" id="GO:0000122">
    <property type="term" value="P:negative regulation of transcription by RNA polymerase II"/>
    <property type="evidence" value="ECO:0000266"/>
    <property type="project" value="RGD"/>
</dbReference>
<dbReference type="GO" id="GO:0060339">
    <property type="term" value="P:negative regulation of type I interferon-mediated signaling pathway"/>
    <property type="evidence" value="ECO:0000266"/>
    <property type="project" value="RGD"/>
</dbReference>
<dbReference type="GO" id="GO:0050679">
    <property type="term" value="P:positive regulation of epithelial cell proliferation"/>
    <property type="evidence" value="ECO:0000270"/>
    <property type="project" value="RGD"/>
</dbReference>
<dbReference type="GO" id="GO:0060054">
    <property type="term" value="P:positive regulation of epithelial cell proliferation involved in wound healing"/>
    <property type="evidence" value="ECO:0000266"/>
    <property type="project" value="RGD"/>
</dbReference>
<dbReference type="GO" id="GO:0010628">
    <property type="term" value="P:positive regulation of gene expression"/>
    <property type="evidence" value="ECO:0000266"/>
    <property type="project" value="RGD"/>
</dbReference>
<dbReference type="GO" id="GO:0032727">
    <property type="term" value="P:positive regulation of interferon-alpha production"/>
    <property type="evidence" value="ECO:0000266"/>
    <property type="project" value="RGD"/>
</dbReference>
<dbReference type="GO" id="GO:0045944">
    <property type="term" value="P:positive regulation of transcription by RNA polymerase II"/>
    <property type="evidence" value="ECO:0000266"/>
    <property type="project" value="RGD"/>
</dbReference>
<dbReference type="GO" id="GO:0060340">
    <property type="term" value="P:positive regulation of type I interferon-mediated signaling pathway"/>
    <property type="evidence" value="ECO:0000266"/>
    <property type="project" value="RGD"/>
</dbReference>
<dbReference type="GO" id="GO:0006606">
    <property type="term" value="P:protein import into nucleus"/>
    <property type="evidence" value="ECO:0000266"/>
    <property type="project" value="RGD"/>
</dbReference>
<dbReference type="GO" id="GO:0006508">
    <property type="term" value="P:proteolysis"/>
    <property type="evidence" value="ECO:0000266"/>
    <property type="project" value="RGD"/>
</dbReference>
<dbReference type="GO" id="GO:0050691">
    <property type="term" value="P:regulation of defense response to virus by host"/>
    <property type="evidence" value="ECO:0000266"/>
    <property type="project" value="RGD"/>
</dbReference>
<dbReference type="GO" id="GO:1901163">
    <property type="term" value="P:regulation of trophoblast cell migration"/>
    <property type="evidence" value="ECO:0000315"/>
    <property type="project" value="RGD"/>
</dbReference>
<dbReference type="GO" id="GO:0001666">
    <property type="term" value="P:response to hypoxia"/>
    <property type="evidence" value="ECO:0000270"/>
    <property type="project" value="RGD"/>
</dbReference>
<dbReference type="GO" id="GO:0009410">
    <property type="term" value="P:response to xenobiotic stimulus"/>
    <property type="evidence" value="ECO:0000270"/>
    <property type="project" value="RGD"/>
</dbReference>
<dbReference type="GO" id="GO:0035313">
    <property type="term" value="P:wound healing, spreading of epidermal cells"/>
    <property type="evidence" value="ECO:0000266"/>
    <property type="project" value="RGD"/>
</dbReference>
<dbReference type="CDD" id="cd00094">
    <property type="entry name" value="HX"/>
    <property type="match status" value="1"/>
</dbReference>
<dbReference type="CDD" id="cd04278">
    <property type="entry name" value="ZnMc_MMP"/>
    <property type="match status" value="1"/>
</dbReference>
<dbReference type="FunFam" id="3.40.390.10:FF:000007">
    <property type="entry name" value="Collagenase 3"/>
    <property type="match status" value="1"/>
</dbReference>
<dbReference type="FunFam" id="2.110.10.10:FF:000002">
    <property type="entry name" value="Matrix metallopeptidase 3"/>
    <property type="match status" value="1"/>
</dbReference>
<dbReference type="Gene3D" id="3.40.390.10">
    <property type="entry name" value="Collagenase (Catalytic Domain)"/>
    <property type="match status" value="1"/>
</dbReference>
<dbReference type="Gene3D" id="2.110.10.10">
    <property type="entry name" value="Hemopexin-like domain"/>
    <property type="match status" value="1"/>
</dbReference>
<dbReference type="InterPro" id="IPR000585">
    <property type="entry name" value="Hemopexin-like_dom"/>
</dbReference>
<dbReference type="InterPro" id="IPR036375">
    <property type="entry name" value="Hemopexin-like_dom_sf"/>
</dbReference>
<dbReference type="InterPro" id="IPR018487">
    <property type="entry name" value="Hemopexin-like_repeat"/>
</dbReference>
<dbReference type="InterPro" id="IPR018486">
    <property type="entry name" value="Hemopexin_CS"/>
</dbReference>
<dbReference type="InterPro" id="IPR033739">
    <property type="entry name" value="M10A_MMP"/>
</dbReference>
<dbReference type="InterPro" id="IPR024079">
    <property type="entry name" value="MetalloPept_cat_dom_sf"/>
</dbReference>
<dbReference type="InterPro" id="IPR001818">
    <property type="entry name" value="Pept_M10_metallopeptidase"/>
</dbReference>
<dbReference type="InterPro" id="IPR021190">
    <property type="entry name" value="Pept_M10A"/>
</dbReference>
<dbReference type="InterPro" id="IPR006026">
    <property type="entry name" value="Peptidase_Metallo"/>
</dbReference>
<dbReference type="InterPro" id="IPR002477">
    <property type="entry name" value="Peptidoglycan-bd-like"/>
</dbReference>
<dbReference type="InterPro" id="IPR036365">
    <property type="entry name" value="PGBD-like_sf"/>
</dbReference>
<dbReference type="PANTHER" id="PTHR10201:SF267">
    <property type="entry name" value="MACROPHAGE METALLOELASTASE"/>
    <property type="match status" value="1"/>
</dbReference>
<dbReference type="PANTHER" id="PTHR10201">
    <property type="entry name" value="MATRIX METALLOPROTEINASE"/>
    <property type="match status" value="1"/>
</dbReference>
<dbReference type="Pfam" id="PF00045">
    <property type="entry name" value="Hemopexin"/>
    <property type="match status" value="4"/>
</dbReference>
<dbReference type="Pfam" id="PF00413">
    <property type="entry name" value="Peptidase_M10"/>
    <property type="match status" value="1"/>
</dbReference>
<dbReference type="Pfam" id="PF01471">
    <property type="entry name" value="PG_binding_1"/>
    <property type="match status" value="1"/>
</dbReference>
<dbReference type="PIRSF" id="PIRSF001191">
    <property type="entry name" value="Peptidase_M10A_matrix"/>
    <property type="match status" value="1"/>
</dbReference>
<dbReference type="PRINTS" id="PR00138">
    <property type="entry name" value="MATRIXIN"/>
</dbReference>
<dbReference type="SMART" id="SM00120">
    <property type="entry name" value="HX"/>
    <property type="match status" value="4"/>
</dbReference>
<dbReference type="SMART" id="SM00235">
    <property type="entry name" value="ZnMc"/>
    <property type="match status" value="1"/>
</dbReference>
<dbReference type="SUPFAM" id="SSF50923">
    <property type="entry name" value="Hemopexin-like domain"/>
    <property type="match status" value="1"/>
</dbReference>
<dbReference type="SUPFAM" id="SSF55486">
    <property type="entry name" value="Metalloproteases ('zincins'), catalytic domain"/>
    <property type="match status" value="1"/>
</dbReference>
<dbReference type="SUPFAM" id="SSF47090">
    <property type="entry name" value="PGBD-like"/>
    <property type="match status" value="1"/>
</dbReference>
<dbReference type="PROSITE" id="PS00024">
    <property type="entry name" value="HEMOPEXIN"/>
    <property type="match status" value="1"/>
</dbReference>
<dbReference type="PROSITE" id="PS51642">
    <property type="entry name" value="HEMOPEXIN_2"/>
    <property type="match status" value="4"/>
</dbReference>
<dbReference type="PROSITE" id="PS00142">
    <property type="entry name" value="ZINC_PROTEASE"/>
    <property type="match status" value="1"/>
</dbReference>
<sequence length="465" mass="53738">MKFLLVLVLLVSLQVSACGAAPMNESEFAEWYLSRFFDYQGDRIPMTKTKTNRNLLEEKLQEMQQFFGLEVTGQLDTSTLKIMHTSRCGVPDVQHLRAVPQRSRWMKRYLTYRIYNYTPDMKRADVDYIFQKAFQVWSDVTPLRFRKIHKGEADITILFAFGDHGDFYDFDGKGGTLAHAFYPGPGIQGDAHFDEAETWTKSFQGTNLFLVAVHELGHSLGLRHSNNPKSIMYPTYRYLHPNTFRLSADDIHSIQSLYGAPVKNPSLTNPGSPPSTVCHQSLSFDAVTTVGDKIFFFKDWFFWWRLPGSPATNITSISSMWPTIPSGIQAAYEIGGRNQLFLFKDEKYWLINNLVPEPHYPRSIHSLGFPASVKKIDAAVFDPLRQKVYFFVDKQYWRYDVRQELMDAAYPKLISTHFPGIRPKIDAVLYFKRHYYIFQGAYQLEYDPLLDRVTKTLSSTSWFGC</sequence>
<evidence type="ECO:0000250" key="1"/>
<evidence type="ECO:0000255" key="2"/>
<evidence type="ECO:0000255" key="3">
    <source>
        <dbReference type="PROSITE-ProRule" id="PRU10095"/>
    </source>
</evidence>
<evidence type="ECO:0000305" key="4"/>
<gene>
    <name type="primary">Mmp12</name>
    <name type="synonym">Mmel</name>
</gene>
<organism>
    <name type="scientific">Rattus norvegicus</name>
    <name type="common">Rat</name>
    <dbReference type="NCBI Taxonomy" id="10116"/>
    <lineage>
        <taxon>Eukaryota</taxon>
        <taxon>Metazoa</taxon>
        <taxon>Chordata</taxon>
        <taxon>Craniata</taxon>
        <taxon>Vertebrata</taxon>
        <taxon>Euteleostomi</taxon>
        <taxon>Mammalia</taxon>
        <taxon>Eutheria</taxon>
        <taxon>Euarchontoglires</taxon>
        <taxon>Glires</taxon>
        <taxon>Rodentia</taxon>
        <taxon>Myomorpha</taxon>
        <taxon>Muroidea</taxon>
        <taxon>Muridae</taxon>
        <taxon>Murinae</taxon>
        <taxon>Rattus</taxon>
    </lineage>
</organism>
<feature type="signal peptide" evidence="4">
    <location>
        <begin position="1"/>
        <end position="21"/>
    </location>
</feature>
<feature type="propeptide" id="PRO_0000028782" description="Activation peptide" evidence="1">
    <location>
        <begin position="22"/>
        <end position="101"/>
    </location>
</feature>
<feature type="chain" id="PRO_0000028783" description="Macrophage metalloelastase">
    <location>
        <begin position="102"/>
        <end position="465"/>
    </location>
</feature>
<feature type="repeat" description="Hemopexin 1">
    <location>
        <begin position="281"/>
        <end position="324"/>
    </location>
</feature>
<feature type="repeat" description="Hemopexin 2">
    <location>
        <begin position="325"/>
        <end position="371"/>
    </location>
</feature>
<feature type="repeat" description="Hemopexin 3">
    <location>
        <begin position="373"/>
        <end position="421"/>
    </location>
</feature>
<feature type="repeat" description="Hemopexin 4">
    <location>
        <begin position="422"/>
        <end position="465"/>
    </location>
</feature>
<feature type="short sequence motif" description="Cysteine switch" evidence="1">
    <location>
        <begin position="86"/>
        <end position="93"/>
    </location>
</feature>
<feature type="active site" evidence="3">
    <location>
        <position position="215"/>
    </location>
</feature>
<feature type="binding site" description="in inhibited form" evidence="1">
    <location>
        <position position="88"/>
    </location>
    <ligand>
        <name>Zn(2+)</name>
        <dbReference type="ChEBI" id="CHEBI:29105"/>
        <label>2</label>
        <note>catalytic</note>
    </ligand>
</feature>
<feature type="binding site" evidence="1">
    <location>
        <position position="120"/>
    </location>
    <ligand>
        <name>Ca(2+)</name>
        <dbReference type="ChEBI" id="CHEBI:29108"/>
        <label>1</label>
    </ligand>
</feature>
<feature type="binding site" evidence="1">
    <location>
        <position position="154"/>
    </location>
    <ligand>
        <name>Ca(2+)</name>
        <dbReference type="ChEBI" id="CHEBI:29108"/>
        <label>2</label>
    </ligand>
</feature>
<feature type="binding site" evidence="1">
    <location>
        <position position="164"/>
    </location>
    <ligand>
        <name>Zn(2+)</name>
        <dbReference type="ChEBI" id="CHEBI:29105"/>
        <label>1</label>
    </ligand>
</feature>
<feature type="binding site" evidence="1">
    <location>
        <position position="166"/>
    </location>
    <ligand>
        <name>Zn(2+)</name>
        <dbReference type="ChEBI" id="CHEBI:29105"/>
        <label>1</label>
    </ligand>
</feature>
<feature type="binding site" evidence="1">
    <location>
        <position position="171"/>
    </location>
    <ligand>
        <name>Ca(2+)</name>
        <dbReference type="ChEBI" id="CHEBI:29108"/>
        <label>3</label>
    </ligand>
</feature>
<feature type="binding site" evidence="1">
    <location>
        <position position="172"/>
    </location>
    <ligand>
        <name>Ca(2+)</name>
        <dbReference type="ChEBI" id="CHEBI:29108"/>
        <label>3</label>
    </ligand>
</feature>
<feature type="binding site" evidence="1">
    <location>
        <position position="174"/>
    </location>
    <ligand>
        <name>Ca(2+)</name>
        <dbReference type="ChEBI" id="CHEBI:29108"/>
        <label>3</label>
    </ligand>
</feature>
<feature type="binding site" evidence="1">
    <location>
        <position position="176"/>
    </location>
    <ligand>
        <name>Ca(2+)</name>
        <dbReference type="ChEBI" id="CHEBI:29108"/>
        <label>3</label>
    </ligand>
</feature>
<feature type="binding site" evidence="1">
    <location>
        <position position="179"/>
    </location>
    <ligand>
        <name>Zn(2+)</name>
        <dbReference type="ChEBI" id="CHEBI:29105"/>
        <label>1</label>
    </ligand>
</feature>
<feature type="binding site" evidence="1">
    <location>
        <position position="186"/>
    </location>
    <ligand>
        <name>Ca(2+)</name>
        <dbReference type="ChEBI" id="CHEBI:29108"/>
        <label>2</label>
    </ligand>
</feature>
<feature type="binding site" evidence="1">
    <location>
        <position position="190"/>
    </location>
    <ligand>
        <name>Ca(2+)</name>
        <dbReference type="ChEBI" id="CHEBI:29108"/>
        <label>2</label>
    </ligand>
</feature>
<feature type="binding site" evidence="1">
    <location>
        <position position="192"/>
    </location>
    <ligand>
        <name>Zn(2+)</name>
        <dbReference type="ChEBI" id="CHEBI:29105"/>
        <label>1</label>
    </ligand>
</feature>
<feature type="binding site" evidence="1">
    <location>
        <position position="194"/>
    </location>
    <ligand>
        <name>Ca(2+)</name>
        <dbReference type="ChEBI" id="CHEBI:29108"/>
        <label>3</label>
    </ligand>
</feature>
<feature type="binding site" evidence="1">
    <location>
        <position position="195"/>
    </location>
    <ligand>
        <name>Ca(2+)</name>
        <dbReference type="ChEBI" id="CHEBI:29108"/>
        <label>1</label>
    </ligand>
</feature>
<feature type="binding site" evidence="1">
    <location>
        <position position="197"/>
    </location>
    <ligand>
        <name>Ca(2+)</name>
        <dbReference type="ChEBI" id="CHEBI:29108"/>
        <label>1</label>
    </ligand>
</feature>
<feature type="binding site" evidence="1">
    <location>
        <position position="197"/>
    </location>
    <ligand>
        <name>Ca(2+)</name>
        <dbReference type="ChEBI" id="CHEBI:29108"/>
        <label>3</label>
    </ligand>
</feature>
<feature type="binding site" evidence="1">
    <location>
        <position position="214"/>
    </location>
    <ligand>
        <name>Zn(2+)</name>
        <dbReference type="ChEBI" id="CHEBI:29105"/>
        <label>2</label>
        <note>catalytic</note>
    </ligand>
</feature>
<feature type="binding site" evidence="1">
    <location>
        <position position="218"/>
    </location>
    <ligand>
        <name>Zn(2+)</name>
        <dbReference type="ChEBI" id="CHEBI:29105"/>
        <label>2</label>
        <note>catalytic</note>
    </ligand>
</feature>
<feature type="binding site" evidence="1">
    <location>
        <position position="224"/>
    </location>
    <ligand>
        <name>Zn(2+)</name>
        <dbReference type="ChEBI" id="CHEBI:29105"/>
        <label>2</label>
        <note>catalytic</note>
    </ligand>
</feature>
<feature type="binding site" evidence="1">
    <location>
        <position position="285"/>
    </location>
    <ligand>
        <name>Ca(2+)</name>
        <dbReference type="ChEBI" id="CHEBI:29108"/>
        <label>4</label>
    </ligand>
</feature>
<feature type="binding site" evidence="1">
    <location>
        <position position="377"/>
    </location>
    <ligand>
        <name>Ca(2+)</name>
        <dbReference type="ChEBI" id="CHEBI:29108"/>
        <label>4</label>
    </ligand>
</feature>
<feature type="binding site" evidence="1">
    <location>
        <position position="426"/>
    </location>
    <ligand>
        <name>Ca(2+)</name>
        <dbReference type="ChEBI" id="CHEBI:29108"/>
        <label>4</label>
    </ligand>
</feature>
<feature type="glycosylation site" description="N-linked (GlcNAc...) asparagine" evidence="2">
    <location>
        <position position="313"/>
    </location>
</feature>
<feature type="disulfide bond" evidence="1">
    <location>
        <begin position="278"/>
        <end position="465"/>
    </location>
</feature>
<feature type="sequence conflict" description="In Ref. 2; AAH88120." evidence="4" ref="2">
    <original>R</original>
    <variation>P</variation>
    <location>
        <position position="223"/>
    </location>
</feature>
<feature type="sequence conflict" description="In Ref. 2; AAH88120." evidence="4" ref="2">
    <original>D</original>
    <variation>H</variation>
    <location>
        <position position="451"/>
    </location>
</feature>
<accession>Q63341</accession>
<accession>Q5I0P0</accession>
<protein>
    <recommendedName>
        <fullName>Macrophage metalloelastase</fullName>
        <shortName>MME</shortName>
        <ecNumber>3.4.24.65</ecNumber>
    </recommendedName>
    <alternativeName>
        <fullName>Matrix metalloproteinase-12</fullName>
        <shortName>MMP-12</shortName>
    </alternativeName>
</protein>
<name>MMP12_RAT</name>
<comment type="function">
    <text evidence="1">May be involved in tissue injury and remodeling. Has significant elastolytic activity. Can accept large and small amino acids at the P1' site, but has a preference for leucine. Aromatic or hydrophobic residues are preferred at the P1 site, with small hydrophobic residues (preferably alanine) occupying P3 (By similarity).</text>
</comment>
<comment type="catalytic activity">
    <reaction>
        <text>Hydrolysis of soluble and insoluble elastin. Specific cleavages are also produced at 14-Ala-|-Leu-15 and 16-Tyr-|-Leu-17 in the B chain of insulin.</text>
        <dbReference type="EC" id="3.4.24.65"/>
    </reaction>
</comment>
<comment type="cofactor">
    <cofactor evidence="1">
        <name>Ca(2+)</name>
        <dbReference type="ChEBI" id="CHEBI:29108"/>
    </cofactor>
    <text evidence="1">Binds 4 Ca(2+) ions per subunit.</text>
</comment>
<comment type="cofactor">
    <cofactor evidence="1">
        <name>Zn(2+)</name>
        <dbReference type="ChEBI" id="CHEBI:29105"/>
    </cofactor>
    <text evidence="1">Binds 2 Zn(2+) ions per subunit.</text>
</comment>
<comment type="subcellular location">
    <subcellularLocation>
        <location evidence="1">Secreted</location>
        <location evidence="1">Extracellular space</location>
        <location evidence="1">Extracellular matrix</location>
    </subcellularLocation>
</comment>
<comment type="domain">
    <text>The conserved cysteine present in the cysteine-switch motif binds the catalytic zinc ion, thus inhibiting the enzyme. The dissociation of the cysteine from the zinc ion upon the activation-peptide release activates the enzyme.</text>
</comment>
<comment type="similarity">
    <text evidence="4">Belongs to the peptidase M10A family.</text>
</comment>
<keyword id="KW-0106">Calcium</keyword>
<keyword id="KW-1015">Disulfide bond</keyword>
<keyword id="KW-0272">Extracellular matrix</keyword>
<keyword id="KW-0325">Glycoprotein</keyword>
<keyword id="KW-0378">Hydrolase</keyword>
<keyword id="KW-0479">Metal-binding</keyword>
<keyword id="KW-0482">Metalloprotease</keyword>
<keyword id="KW-0645">Protease</keyword>
<keyword id="KW-1185">Reference proteome</keyword>
<keyword id="KW-0677">Repeat</keyword>
<keyword id="KW-0964">Secreted</keyword>
<keyword id="KW-0732">Signal</keyword>
<keyword id="KW-0862">Zinc</keyword>
<keyword id="KW-0865">Zymogen</keyword>
<reference key="1">
    <citation type="submission" date="1996-06" db="EMBL/GenBank/DDBJ databases">
        <authorList>
            <person name="Cossins J."/>
            <person name="Clements J."/>
            <person name="Catlin G."/>
        </authorList>
    </citation>
    <scope>NUCLEOTIDE SEQUENCE [MRNA]</scope>
    <source>
        <strain>Sprague-Dawley</strain>
    </source>
</reference>
<reference key="2">
    <citation type="journal article" date="2004" name="Genome Res.">
        <title>The status, quality, and expansion of the NIH full-length cDNA project: the Mammalian Gene Collection (MGC).</title>
        <authorList>
            <consortium name="The MGC Project Team"/>
        </authorList>
    </citation>
    <scope>NUCLEOTIDE SEQUENCE [LARGE SCALE MRNA]</scope>
    <source>
        <tissue>Thymus</tissue>
    </source>
</reference>
<proteinExistence type="evidence at transcript level"/>